<proteinExistence type="inferred from homology"/>
<keyword id="KW-0997">Cell inner membrane</keyword>
<keyword id="KW-1003">Cell membrane</keyword>
<keyword id="KW-0342">GTP-binding</keyword>
<keyword id="KW-0378">Hydrolase</keyword>
<keyword id="KW-0472">Membrane</keyword>
<keyword id="KW-0547">Nucleotide-binding</keyword>
<keyword id="KW-0648">Protein biosynthesis</keyword>
<evidence type="ECO:0000255" key="1">
    <source>
        <dbReference type="HAMAP-Rule" id="MF_00071"/>
    </source>
</evidence>
<name>LEPA_CHLTA</name>
<comment type="function">
    <text evidence="1">Required for accurate and efficient protein synthesis under certain stress conditions. May act as a fidelity factor of the translation reaction, by catalyzing a one-codon backward translocation of tRNAs on improperly translocated ribosomes. Back-translocation proceeds from a post-translocation (POST) complex to a pre-translocation (PRE) complex, thus giving elongation factor G a second chance to translocate the tRNAs correctly. Binds to ribosomes in a GTP-dependent manner.</text>
</comment>
<comment type="catalytic activity">
    <reaction evidence="1">
        <text>GTP + H2O = GDP + phosphate + H(+)</text>
        <dbReference type="Rhea" id="RHEA:19669"/>
        <dbReference type="ChEBI" id="CHEBI:15377"/>
        <dbReference type="ChEBI" id="CHEBI:15378"/>
        <dbReference type="ChEBI" id="CHEBI:37565"/>
        <dbReference type="ChEBI" id="CHEBI:43474"/>
        <dbReference type="ChEBI" id="CHEBI:58189"/>
        <dbReference type="EC" id="3.6.5.n1"/>
    </reaction>
</comment>
<comment type="subcellular location">
    <subcellularLocation>
        <location evidence="1">Cell inner membrane</location>
        <topology evidence="1">Peripheral membrane protein</topology>
        <orientation evidence="1">Cytoplasmic side</orientation>
    </subcellularLocation>
</comment>
<comment type="similarity">
    <text evidence="1">Belongs to the TRAFAC class translation factor GTPase superfamily. Classic translation factor GTPase family. LepA subfamily.</text>
</comment>
<protein>
    <recommendedName>
        <fullName evidence="1">Elongation factor 4</fullName>
        <shortName evidence="1">EF-4</shortName>
        <ecNumber evidence="1">3.6.5.n1</ecNumber>
    </recommendedName>
    <alternativeName>
        <fullName evidence="1">Ribosomal back-translocase LepA</fullName>
    </alternativeName>
</protein>
<organism>
    <name type="scientific">Chlamydia trachomatis serovar A (strain ATCC VR-571B / DSM 19440 / HAR-13)</name>
    <dbReference type="NCBI Taxonomy" id="315277"/>
    <lineage>
        <taxon>Bacteria</taxon>
        <taxon>Pseudomonadati</taxon>
        <taxon>Chlamydiota</taxon>
        <taxon>Chlamydiia</taxon>
        <taxon>Chlamydiales</taxon>
        <taxon>Chlamydiaceae</taxon>
        <taxon>Chlamydia/Chlamydophila group</taxon>
        <taxon>Chlamydia</taxon>
    </lineage>
</organism>
<gene>
    <name evidence="1" type="primary">lepA</name>
    <name type="ordered locus">CTA_0069</name>
</gene>
<dbReference type="EC" id="3.6.5.n1" evidence="1"/>
<dbReference type="EMBL" id="CP000051">
    <property type="protein sequence ID" value="AAX50315.1"/>
    <property type="molecule type" value="Genomic_DNA"/>
</dbReference>
<dbReference type="RefSeq" id="WP_011324549.1">
    <property type="nucleotide sequence ID" value="NC_007429.1"/>
</dbReference>
<dbReference type="SMR" id="Q3KMV7"/>
<dbReference type="KEGG" id="cta:CTA_0069"/>
<dbReference type="HOGENOM" id="CLU_009995_3_3_0"/>
<dbReference type="Proteomes" id="UP000002532">
    <property type="component" value="Chromosome"/>
</dbReference>
<dbReference type="GO" id="GO:0005886">
    <property type="term" value="C:plasma membrane"/>
    <property type="evidence" value="ECO:0007669"/>
    <property type="project" value="UniProtKB-SubCell"/>
</dbReference>
<dbReference type="GO" id="GO:0005525">
    <property type="term" value="F:GTP binding"/>
    <property type="evidence" value="ECO:0007669"/>
    <property type="project" value="UniProtKB-UniRule"/>
</dbReference>
<dbReference type="GO" id="GO:0003924">
    <property type="term" value="F:GTPase activity"/>
    <property type="evidence" value="ECO:0007669"/>
    <property type="project" value="UniProtKB-UniRule"/>
</dbReference>
<dbReference type="GO" id="GO:0043022">
    <property type="term" value="F:ribosome binding"/>
    <property type="evidence" value="ECO:0007669"/>
    <property type="project" value="UniProtKB-UniRule"/>
</dbReference>
<dbReference type="GO" id="GO:0003746">
    <property type="term" value="F:translation elongation factor activity"/>
    <property type="evidence" value="ECO:0007669"/>
    <property type="project" value="UniProtKB-UniRule"/>
</dbReference>
<dbReference type="GO" id="GO:0045727">
    <property type="term" value="P:positive regulation of translation"/>
    <property type="evidence" value="ECO:0007669"/>
    <property type="project" value="UniProtKB-UniRule"/>
</dbReference>
<dbReference type="CDD" id="cd03699">
    <property type="entry name" value="EF4_II"/>
    <property type="match status" value="1"/>
</dbReference>
<dbReference type="CDD" id="cd16260">
    <property type="entry name" value="EF4_III"/>
    <property type="match status" value="1"/>
</dbReference>
<dbReference type="CDD" id="cd01890">
    <property type="entry name" value="LepA"/>
    <property type="match status" value="1"/>
</dbReference>
<dbReference type="CDD" id="cd03709">
    <property type="entry name" value="lepA_C"/>
    <property type="match status" value="1"/>
</dbReference>
<dbReference type="FunFam" id="3.40.50.300:FF:000078">
    <property type="entry name" value="Elongation factor 4"/>
    <property type="match status" value="1"/>
</dbReference>
<dbReference type="FunFam" id="2.40.30.10:FF:000015">
    <property type="entry name" value="Translation factor GUF1, mitochondrial"/>
    <property type="match status" value="1"/>
</dbReference>
<dbReference type="FunFam" id="3.30.70.240:FF:000007">
    <property type="entry name" value="Translation factor GUF1, mitochondrial"/>
    <property type="match status" value="1"/>
</dbReference>
<dbReference type="FunFam" id="3.30.70.2570:FF:000001">
    <property type="entry name" value="Translation factor GUF1, mitochondrial"/>
    <property type="match status" value="1"/>
</dbReference>
<dbReference type="FunFam" id="3.30.70.870:FF:000004">
    <property type="entry name" value="Translation factor GUF1, mitochondrial"/>
    <property type="match status" value="1"/>
</dbReference>
<dbReference type="Gene3D" id="3.30.70.240">
    <property type="match status" value="1"/>
</dbReference>
<dbReference type="Gene3D" id="3.30.70.2570">
    <property type="entry name" value="Elongation factor 4, C-terminal domain"/>
    <property type="match status" value="1"/>
</dbReference>
<dbReference type="Gene3D" id="3.30.70.870">
    <property type="entry name" value="Elongation Factor G (Translational Gtpase), domain 3"/>
    <property type="match status" value="1"/>
</dbReference>
<dbReference type="Gene3D" id="3.40.50.300">
    <property type="entry name" value="P-loop containing nucleotide triphosphate hydrolases"/>
    <property type="match status" value="1"/>
</dbReference>
<dbReference type="Gene3D" id="2.40.30.10">
    <property type="entry name" value="Translation factors"/>
    <property type="match status" value="1"/>
</dbReference>
<dbReference type="HAMAP" id="MF_00071">
    <property type="entry name" value="LepA"/>
    <property type="match status" value="1"/>
</dbReference>
<dbReference type="InterPro" id="IPR006297">
    <property type="entry name" value="EF-4"/>
</dbReference>
<dbReference type="InterPro" id="IPR035647">
    <property type="entry name" value="EFG_III/V"/>
</dbReference>
<dbReference type="InterPro" id="IPR000640">
    <property type="entry name" value="EFG_V-like"/>
</dbReference>
<dbReference type="InterPro" id="IPR004161">
    <property type="entry name" value="EFTu-like_2"/>
</dbReference>
<dbReference type="InterPro" id="IPR038363">
    <property type="entry name" value="LepA_C_sf"/>
</dbReference>
<dbReference type="InterPro" id="IPR013842">
    <property type="entry name" value="LepA_CTD"/>
</dbReference>
<dbReference type="InterPro" id="IPR035654">
    <property type="entry name" value="LepA_IV"/>
</dbReference>
<dbReference type="InterPro" id="IPR027417">
    <property type="entry name" value="P-loop_NTPase"/>
</dbReference>
<dbReference type="InterPro" id="IPR005225">
    <property type="entry name" value="Small_GTP-bd"/>
</dbReference>
<dbReference type="InterPro" id="IPR000795">
    <property type="entry name" value="T_Tr_GTP-bd_dom"/>
</dbReference>
<dbReference type="InterPro" id="IPR009000">
    <property type="entry name" value="Transl_B-barrel_sf"/>
</dbReference>
<dbReference type="NCBIfam" id="TIGR01393">
    <property type="entry name" value="lepA"/>
    <property type="match status" value="1"/>
</dbReference>
<dbReference type="NCBIfam" id="TIGR00231">
    <property type="entry name" value="small_GTP"/>
    <property type="match status" value="1"/>
</dbReference>
<dbReference type="PANTHER" id="PTHR43512:SF4">
    <property type="entry name" value="TRANSLATION FACTOR GUF1 HOMOLOG, CHLOROPLASTIC"/>
    <property type="match status" value="1"/>
</dbReference>
<dbReference type="PANTHER" id="PTHR43512">
    <property type="entry name" value="TRANSLATION FACTOR GUF1-RELATED"/>
    <property type="match status" value="1"/>
</dbReference>
<dbReference type="Pfam" id="PF00679">
    <property type="entry name" value="EFG_C"/>
    <property type="match status" value="1"/>
</dbReference>
<dbReference type="Pfam" id="PF00009">
    <property type="entry name" value="GTP_EFTU"/>
    <property type="match status" value="1"/>
</dbReference>
<dbReference type="Pfam" id="PF03144">
    <property type="entry name" value="GTP_EFTU_D2"/>
    <property type="match status" value="1"/>
</dbReference>
<dbReference type="Pfam" id="PF06421">
    <property type="entry name" value="LepA_C"/>
    <property type="match status" value="1"/>
</dbReference>
<dbReference type="PRINTS" id="PR00315">
    <property type="entry name" value="ELONGATNFCT"/>
</dbReference>
<dbReference type="SUPFAM" id="SSF54980">
    <property type="entry name" value="EF-G C-terminal domain-like"/>
    <property type="match status" value="2"/>
</dbReference>
<dbReference type="SUPFAM" id="SSF52540">
    <property type="entry name" value="P-loop containing nucleoside triphosphate hydrolases"/>
    <property type="match status" value="1"/>
</dbReference>
<dbReference type="SUPFAM" id="SSF50447">
    <property type="entry name" value="Translation proteins"/>
    <property type="match status" value="1"/>
</dbReference>
<dbReference type="PROSITE" id="PS51722">
    <property type="entry name" value="G_TR_2"/>
    <property type="match status" value="1"/>
</dbReference>
<accession>Q3KMV7</accession>
<reference key="1">
    <citation type="journal article" date="2005" name="Infect. Immun.">
        <title>Comparative genomic analysis of Chlamydia trachomatis oculotropic and genitotropic strains.</title>
        <authorList>
            <person name="Carlson J.H."/>
            <person name="Porcella S.F."/>
            <person name="McClarty G."/>
            <person name="Caldwell H.D."/>
        </authorList>
    </citation>
    <scope>NUCLEOTIDE SEQUENCE [LARGE SCALE GENOMIC DNA]</scope>
    <source>
        <strain>ATCC VR-571B / DSM 19440 / HAR-13</strain>
    </source>
</reference>
<feature type="chain" id="PRO_0000224750" description="Elongation factor 4">
    <location>
        <begin position="1"/>
        <end position="602"/>
    </location>
</feature>
<feature type="domain" description="tr-type G">
    <location>
        <begin position="7"/>
        <end position="188"/>
    </location>
</feature>
<feature type="binding site" evidence="1">
    <location>
        <begin position="19"/>
        <end position="24"/>
    </location>
    <ligand>
        <name>GTP</name>
        <dbReference type="ChEBI" id="CHEBI:37565"/>
    </ligand>
</feature>
<feature type="binding site" evidence="1">
    <location>
        <begin position="135"/>
        <end position="138"/>
    </location>
    <ligand>
        <name>GTP</name>
        <dbReference type="ChEBI" id="CHEBI:37565"/>
    </ligand>
</feature>
<sequence>MKPYKIENIRNFSIIAHIDHGKSTIADRLLESTSTIEQREMREQLLDSMDLERERGITIKAHPVTMTYEYEGETYELNLIDTPGHVDFSYEVSRSLAACEGALLIVDAAQGVQAQSLANVYLALERDLEIIPVLNKIDLPAAQPEAIKKQIEEFIGLDTSNTIACSAKTGQGIPEILESIIRLVPPPKPPQETELKALIFDSHYDPYVGIMVYVRVISGEIKKGDRITFMATKGSSFEVLGIGAFLPEATLMEGSLRAGQVGYFIANLKKVKDVKIGDTVTTVKHPAKEPLEGFKEIKPVVFAGIYPIDSSDFDTLKDALGRLQLNDSALTIEQESSHSLGFGFRCGFLGLLHLEIIFERISREFDLDIIATAPSVIYKVVLKNGKTLFIDNPTAYPDPALIEHMEEPWVHVNIITPQEYLSNIMSLCMDKRGICLKTDMLDQHRLVLSYELPLNEIVSDFNDKLKSVTKGYGSFDYRLGDYKKGAIIKLEILINDEAVDAFSCLVHRDKAESKGRSICEKLVDVIPPQLFKIPIQAAINKKIIARETIRALAKNVTAKCYGGDITRKRKLWDKQKKGKKRMKEFGKVSIPNTAFVAVLKME</sequence>